<dbReference type="EC" id="4.1.2.20" evidence="1"/>
<dbReference type="EMBL" id="CP000857">
    <property type="protein sequence ID" value="ACN47410.1"/>
    <property type="molecule type" value="Genomic_DNA"/>
</dbReference>
<dbReference type="RefSeq" id="WP_001057717.1">
    <property type="nucleotide sequence ID" value="NC_012125.1"/>
</dbReference>
<dbReference type="SMR" id="C0PZ22"/>
<dbReference type="KEGG" id="sei:SPC_3325"/>
<dbReference type="HOGENOM" id="CLU_059964_1_0_6"/>
<dbReference type="UniPathway" id="UPA00565">
    <property type="reaction ID" value="UER00630"/>
</dbReference>
<dbReference type="Proteomes" id="UP000001599">
    <property type="component" value="Chromosome"/>
</dbReference>
<dbReference type="GO" id="GO:0005737">
    <property type="term" value="C:cytoplasm"/>
    <property type="evidence" value="ECO:0007669"/>
    <property type="project" value="TreeGrafter"/>
</dbReference>
<dbReference type="GO" id="GO:0008672">
    <property type="term" value="F:2-dehydro-3-deoxyglucarate aldolase activity"/>
    <property type="evidence" value="ECO:0007669"/>
    <property type="project" value="UniProtKB-UniRule"/>
</dbReference>
<dbReference type="GO" id="GO:0000287">
    <property type="term" value="F:magnesium ion binding"/>
    <property type="evidence" value="ECO:0007669"/>
    <property type="project" value="UniProtKB-UniRule"/>
</dbReference>
<dbReference type="GO" id="GO:0042838">
    <property type="term" value="P:D-glucarate catabolic process"/>
    <property type="evidence" value="ECO:0007669"/>
    <property type="project" value="UniProtKB-UniRule"/>
</dbReference>
<dbReference type="GO" id="GO:0046392">
    <property type="term" value="P:galactarate catabolic process"/>
    <property type="evidence" value="ECO:0007669"/>
    <property type="project" value="UniProtKB-UniRule"/>
</dbReference>
<dbReference type="FunFam" id="3.20.20.60:FF:000004">
    <property type="entry name" value="5-keto-4-deoxy-D-glucarate aldolase"/>
    <property type="match status" value="1"/>
</dbReference>
<dbReference type="Gene3D" id="3.20.20.60">
    <property type="entry name" value="Phosphoenolpyruvate-binding domains"/>
    <property type="match status" value="1"/>
</dbReference>
<dbReference type="HAMAP" id="MF_01291">
    <property type="entry name" value="KDGluc_aldolase"/>
    <property type="match status" value="1"/>
</dbReference>
<dbReference type="InterPro" id="IPR005000">
    <property type="entry name" value="Aldolase/citrate-lyase_domain"/>
</dbReference>
<dbReference type="InterPro" id="IPR017648">
    <property type="entry name" value="GarL"/>
</dbReference>
<dbReference type="InterPro" id="IPR050251">
    <property type="entry name" value="HpcH-HpaI_aldolase"/>
</dbReference>
<dbReference type="InterPro" id="IPR015813">
    <property type="entry name" value="Pyrv/PenolPyrv_kinase-like_dom"/>
</dbReference>
<dbReference type="InterPro" id="IPR040442">
    <property type="entry name" value="Pyrv_kinase-like_dom_sf"/>
</dbReference>
<dbReference type="NCBIfam" id="TIGR03239">
    <property type="entry name" value="GarL"/>
    <property type="match status" value="1"/>
</dbReference>
<dbReference type="NCBIfam" id="NF007849">
    <property type="entry name" value="PRK10558.1"/>
    <property type="match status" value="1"/>
</dbReference>
<dbReference type="PANTHER" id="PTHR30502">
    <property type="entry name" value="2-KETO-3-DEOXY-L-RHAMNONATE ALDOLASE"/>
    <property type="match status" value="1"/>
</dbReference>
<dbReference type="PANTHER" id="PTHR30502:SF4">
    <property type="entry name" value="5-KETO-4-DEOXY-D-GLUCARATE ALDOLASE"/>
    <property type="match status" value="1"/>
</dbReference>
<dbReference type="Pfam" id="PF03328">
    <property type="entry name" value="HpcH_HpaI"/>
    <property type="match status" value="1"/>
</dbReference>
<dbReference type="SUPFAM" id="SSF51621">
    <property type="entry name" value="Phosphoenolpyruvate/pyruvate domain"/>
    <property type="match status" value="1"/>
</dbReference>
<feature type="chain" id="PRO_1000165273" description="5-keto-4-deoxy-D-glucarate aldolase">
    <location>
        <begin position="1"/>
        <end position="256"/>
    </location>
</feature>
<feature type="active site" description="Proton acceptor" evidence="1">
    <location>
        <position position="50"/>
    </location>
</feature>
<feature type="binding site" evidence="1">
    <location>
        <position position="151"/>
    </location>
    <ligand>
        <name>substrate</name>
    </ligand>
</feature>
<feature type="binding site" evidence="1">
    <location>
        <position position="153"/>
    </location>
    <ligand>
        <name>Mg(2+)</name>
        <dbReference type="ChEBI" id="CHEBI:18420"/>
    </ligand>
</feature>
<feature type="binding site" evidence="1">
    <location>
        <position position="178"/>
    </location>
    <ligand>
        <name>substrate</name>
    </ligand>
</feature>
<feature type="binding site" evidence="1">
    <location>
        <position position="179"/>
    </location>
    <ligand>
        <name>Mg(2+)</name>
        <dbReference type="ChEBI" id="CHEBI:18420"/>
    </ligand>
</feature>
<feature type="binding site" evidence="1">
    <location>
        <position position="179"/>
    </location>
    <ligand>
        <name>substrate</name>
    </ligand>
</feature>
<feature type="site" description="Transition state stabilizer" evidence="1">
    <location>
        <position position="75"/>
    </location>
</feature>
<feature type="site" description="Increases basicity of active site His" evidence="1">
    <location>
        <position position="89"/>
    </location>
</feature>
<proteinExistence type="inferred from homology"/>
<organism>
    <name type="scientific">Salmonella paratyphi C (strain RKS4594)</name>
    <dbReference type="NCBI Taxonomy" id="476213"/>
    <lineage>
        <taxon>Bacteria</taxon>
        <taxon>Pseudomonadati</taxon>
        <taxon>Pseudomonadota</taxon>
        <taxon>Gammaproteobacteria</taxon>
        <taxon>Enterobacterales</taxon>
        <taxon>Enterobacteriaceae</taxon>
        <taxon>Salmonella</taxon>
    </lineage>
</organism>
<accession>C0PZ22</accession>
<protein>
    <recommendedName>
        <fullName evidence="1">5-keto-4-deoxy-D-glucarate aldolase</fullName>
        <shortName evidence="1">KDGluc aldolase</shortName>
        <shortName evidence="1">KDGlucA</shortName>
        <ecNumber evidence="1">4.1.2.20</ecNumber>
    </recommendedName>
    <alternativeName>
        <fullName evidence="1">2-dehydro-3-deoxy-D-glucarate aldolase</fullName>
    </alternativeName>
    <alternativeName>
        <fullName evidence="1">2-keto-3-deoxy-D-glucarate aldolase</fullName>
    </alternativeName>
    <alternativeName>
        <fullName evidence="1">5-dehydro-4-deoxy-D-glucarate aldolase</fullName>
    </alternativeName>
    <alternativeName>
        <fullName evidence="1">Alpha-keto-beta-deoxy-D-glucarate aldolase</fullName>
    </alternativeName>
</protein>
<reference key="1">
    <citation type="journal article" date="2009" name="PLoS ONE">
        <title>Salmonella paratyphi C: genetic divergence from Salmonella choleraesuis and pathogenic convergence with Salmonella typhi.</title>
        <authorList>
            <person name="Liu W.-Q."/>
            <person name="Feng Y."/>
            <person name="Wang Y."/>
            <person name="Zou Q.-H."/>
            <person name="Chen F."/>
            <person name="Guo J.-T."/>
            <person name="Peng Y.-H."/>
            <person name="Jin Y."/>
            <person name="Li Y.-G."/>
            <person name="Hu S.-N."/>
            <person name="Johnston R.N."/>
            <person name="Liu G.-R."/>
            <person name="Liu S.-L."/>
        </authorList>
    </citation>
    <scope>NUCLEOTIDE SEQUENCE [LARGE SCALE GENOMIC DNA]</scope>
    <source>
        <strain>RKS4594</strain>
    </source>
</reference>
<name>GARL_SALPC</name>
<gene>
    <name evidence="1" type="primary">garL</name>
    <name type="ordered locus">SPC_3325</name>
</gene>
<sequence>MNNAIFPNKFKAALAAQQVQIGCWSALASPITTEVLGLAGFDWLVLDGEHAPNDVTTLIPQLMALKGSASAPVVRVPTNEPVIIKRMLDIGFYNFLIPFVETQEEAARAVASTRYPPEGIRGVSVSHRANMFGTVPDYFAQSNKNITIIVQIESQLGVDNVDAIAATEGVDGIFVGPSDLAAALGHLGNASHPDVQQTIQHIFARAKAHGKSCGILAPVEADARRYLEWGATFVAVGSDLGAFRASTQKLADTFKK</sequence>
<keyword id="KW-0456">Lyase</keyword>
<keyword id="KW-0460">Magnesium</keyword>
<keyword id="KW-0479">Metal-binding</keyword>
<comment type="function">
    <text evidence="1">Catalyzes the reversible retro-aldol cleavage of both 5-keto-4-deoxy-D-glucarate and 2-keto-3-deoxy-D-glucarate to pyruvate and tartronic semialdehyde.</text>
</comment>
<comment type="catalytic activity">
    <reaction evidence="1">
        <text>5-dehydro-4-deoxy-D-glucarate = 2-hydroxy-3-oxopropanoate + pyruvate</text>
        <dbReference type="Rhea" id="RHEA:27726"/>
        <dbReference type="ChEBI" id="CHEBI:15361"/>
        <dbReference type="ChEBI" id="CHEBI:42819"/>
        <dbReference type="ChEBI" id="CHEBI:57978"/>
    </reaction>
</comment>
<comment type="catalytic activity">
    <reaction evidence="1">
        <text>2-dehydro-3-deoxy-D-glucarate = 2-hydroxy-3-oxopropanoate + pyruvate</text>
        <dbReference type="Rhea" id="RHEA:10268"/>
        <dbReference type="ChEBI" id="CHEBI:15361"/>
        <dbReference type="ChEBI" id="CHEBI:57978"/>
        <dbReference type="ChEBI" id="CHEBI:58098"/>
        <dbReference type="EC" id="4.1.2.20"/>
    </reaction>
</comment>
<comment type="cofactor">
    <cofactor evidence="1">
        <name>Mg(2+)</name>
        <dbReference type="ChEBI" id="CHEBI:18420"/>
    </cofactor>
    <text evidence="1">Binds 1 Mg(2+) ion per subunit.</text>
</comment>
<comment type="pathway">
    <text evidence="1">Carbohydrate acid metabolism; galactarate degradation; D-glycerate from galactarate: step 2/3.</text>
</comment>
<comment type="subunit">
    <text evidence="1">Homohexamer; trimer of dimers.</text>
</comment>
<comment type="similarity">
    <text evidence="1">Belongs to the HpcH/HpaI aldolase family. KDGluc aldolase subfamily.</text>
</comment>
<evidence type="ECO:0000255" key="1">
    <source>
        <dbReference type="HAMAP-Rule" id="MF_01291"/>
    </source>
</evidence>